<comment type="function">
    <text evidence="1">Peptidoglycan polymerase that is essential for cell division.</text>
</comment>
<comment type="catalytic activity">
    <reaction evidence="1">
        <text>[GlcNAc-(1-&gt;4)-Mur2Ac(oyl-L-Ala-gamma-D-Glu-L-Lys-D-Ala-D-Ala)](n)-di-trans,octa-cis-undecaprenyl diphosphate + beta-D-GlcNAc-(1-&gt;4)-Mur2Ac(oyl-L-Ala-gamma-D-Glu-L-Lys-D-Ala-D-Ala)-di-trans,octa-cis-undecaprenyl diphosphate = [GlcNAc-(1-&gt;4)-Mur2Ac(oyl-L-Ala-gamma-D-Glu-L-Lys-D-Ala-D-Ala)](n+1)-di-trans,octa-cis-undecaprenyl diphosphate + di-trans,octa-cis-undecaprenyl diphosphate + H(+)</text>
        <dbReference type="Rhea" id="RHEA:23708"/>
        <dbReference type="Rhea" id="RHEA-COMP:9602"/>
        <dbReference type="Rhea" id="RHEA-COMP:9603"/>
        <dbReference type="ChEBI" id="CHEBI:15378"/>
        <dbReference type="ChEBI" id="CHEBI:58405"/>
        <dbReference type="ChEBI" id="CHEBI:60033"/>
        <dbReference type="ChEBI" id="CHEBI:78435"/>
        <dbReference type="EC" id="2.4.99.28"/>
    </reaction>
</comment>
<comment type="pathway">
    <text evidence="1">Cell wall biogenesis; peptidoglycan biosynthesis.</text>
</comment>
<comment type="subcellular location">
    <subcellularLocation>
        <location evidence="1">Cell inner membrane</location>
        <topology evidence="1">Multi-pass membrane protein</topology>
    </subcellularLocation>
    <text evidence="1">Localizes to the division septum.</text>
</comment>
<comment type="similarity">
    <text evidence="1">Belongs to the SEDS family. FtsW subfamily.</text>
</comment>
<evidence type="ECO:0000255" key="1">
    <source>
        <dbReference type="HAMAP-Rule" id="MF_00913"/>
    </source>
</evidence>
<evidence type="ECO:0000256" key="2">
    <source>
        <dbReference type="SAM" id="MobiDB-lite"/>
    </source>
</evidence>
<sequence length="406" mass="44573">MKIQLRDIFEPLSANHMAKVDLWFVMSLIAILALGIVMVASASISVSESIHNTPYFFMGRQILYLILGVSFGFMMLQIPTQNLQKWGILLMLLSLVLLVLVLVPGIGKTVNGSRRWINLIVFNLQASEVAKVCMVVYVSGYLVRRAERVRENLIGFALPLFLTSLFLIFLLMEPDFGASVVLIGTVIALLFIGGAPVYQFIAIVIMAVLVMAGLALSESYRVKRLMNFVDPWADPFNDGYQLSQALIAYGRGEWFGLGLGNSVQKLSYLPEAHTDFVFSIWVEEMGLLGGVVLLSLFALMLSRIFKIGHRALMGARPFAGYMCFGFAILILAQVIINVGVNTGFLPTKGLTLPLISYGGSSLIITLGSLFVVARVDIENKLASKGGESEERKRKSDESIDDGEALA</sequence>
<gene>
    <name evidence="1" type="primary">ftsW</name>
    <name type="ordered locus">Marme_2523</name>
</gene>
<name>FTSW_MARM1</name>
<feature type="chain" id="PRO_0000415196" description="Probable peptidoglycan glycosyltransferase FtsW">
    <location>
        <begin position="1"/>
        <end position="406"/>
    </location>
</feature>
<feature type="transmembrane region" description="Helical" evidence="1">
    <location>
        <begin position="22"/>
        <end position="42"/>
    </location>
</feature>
<feature type="transmembrane region" description="Helical" evidence="1">
    <location>
        <begin position="56"/>
        <end position="76"/>
    </location>
</feature>
<feature type="transmembrane region" description="Helical" evidence="1">
    <location>
        <begin position="86"/>
        <end position="106"/>
    </location>
</feature>
<feature type="transmembrane region" description="Helical" evidence="1">
    <location>
        <begin position="116"/>
        <end position="136"/>
    </location>
</feature>
<feature type="transmembrane region" description="Helical" evidence="1">
    <location>
        <begin position="153"/>
        <end position="173"/>
    </location>
</feature>
<feature type="transmembrane region" description="Helical" evidence="1">
    <location>
        <begin position="186"/>
        <end position="206"/>
    </location>
</feature>
<feature type="transmembrane region" description="Helical" evidence="1">
    <location>
        <begin position="280"/>
        <end position="300"/>
    </location>
</feature>
<feature type="transmembrane region" description="Helical" evidence="1">
    <location>
        <begin position="318"/>
        <end position="338"/>
    </location>
</feature>
<feature type="transmembrane region" description="Helical" evidence="1">
    <location>
        <begin position="352"/>
        <end position="372"/>
    </location>
</feature>
<feature type="region of interest" description="Disordered" evidence="2">
    <location>
        <begin position="383"/>
        <end position="406"/>
    </location>
</feature>
<feature type="compositionally biased region" description="Basic and acidic residues" evidence="2">
    <location>
        <begin position="383"/>
        <end position="397"/>
    </location>
</feature>
<protein>
    <recommendedName>
        <fullName evidence="1">Probable peptidoglycan glycosyltransferase FtsW</fullName>
        <shortName evidence="1">PGT</shortName>
        <ecNumber evidence="1">2.4.99.28</ecNumber>
    </recommendedName>
    <alternativeName>
        <fullName evidence="1">Cell division protein FtsW</fullName>
    </alternativeName>
    <alternativeName>
        <fullName evidence="1">Cell wall polymerase</fullName>
    </alternativeName>
    <alternativeName>
        <fullName evidence="1">Peptidoglycan polymerase</fullName>
        <shortName evidence="1">PG polymerase</shortName>
    </alternativeName>
</protein>
<accession>F2JVW9</accession>
<reference key="1">
    <citation type="journal article" date="2012" name="Stand. Genomic Sci.">
        <title>Complete genome sequence of the melanogenic marine bacterium Marinomonas mediterranea type strain (MMB-1(T)).</title>
        <authorList>
            <person name="Lucas-Elio P."/>
            <person name="Goodwin L."/>
            <person name="Woyke T."/>
            <person name="Pitluck S."/>
            <person name="Nolan M."/>
            <person name="Kyrpides N.C."/>
            <person name="Detter J.C."/>
            <person name="Copeland A."/>
            <person name="Teshima H."/>
            <person name="Bruce D."/>
            <person name="Detter C."/>
            <person name="Tapia R."/>
            <person name="Han S."/>
            <person name="Land M.L."/>
            <person name="Ivanova N."/>
            <person name="Mikhailova N."/>
            <person name="Johnston A.W."/>
            <person name="Sanchez-Amat A."/>
        </authorList>
    </citation>
    <scope>NUCLEOTIDE SEQUENCE [LARGE SCALE GENOMIC DNA]</scope>
    <source>
        <strain>ATCC 700492 / JCM 21426 / NBRC 103028 / MMB-1</strain>
    </source>
</reference>
<proteinExistence type="inferred from homology"/>
<organism>
    <name type="scientific">Marinomonas mediterranea (strain ATCC 700492 / JCM 21426 / NBRC 103028 / MMB-1)</name>
    <dbReference type="NCBI Taxonomy" id="717774"/>
    <lineage>
        <taxon>Bacteria</taxon>
        <taxon>Pseudomonadati</taxon>
        <taxon>Pseudomonadota</taxon>
        <taxon>Gammaproteobacteria</taxon>
        <taxon>Oceanospirillales</taxon>
        <taxon>Oceanospirillaceae</taxon>
        <taxon>Marinomonas</taxon>
    </lineage>
</organism>
<dbReference type="EC" id="2.4.99.28" evidence="1"/>
<dbReference type="EMBL" id="CP002583">
    <property type="protein sequence ID" value="ADZ91755.1"/>
    <property type="molecule type" value="Genomic_DNA"/>
</dbReference>
<dbReference type="RefSeq" id="WP_013661659.1">
    <property type="nucleotide sequence ID" value="NZ_CP047696.1"/>
</dbReference>
<dbReference type="SMR" id="F2JVW9"/>
<dbReference type="STRING" id="717774.Marme_2523"/>
<dbReference type="KEGG" id="mme:Marme_2523"/>
<dbReference type="PATRIC" id="fig|717774.3.peg.2608"/>
<dbReference type="eggNOG" id="COG0772">
    <property type="taxonomic scope" value="Bacteria"/>
</dbReference>
<dbReference type="HOGENOM" id="CLU_029243_1_1_6"/>
<dbReference type="OrthoDB" id="9768187at2"/>
<dbReference type="UniPathway" id="UPA00219"/>
<dbReference type="Proteomes" id="UP000001062">
    <property type="component" value="Chromosome"/>
</dbReference>
<dbReference type="GO" id="GO:0032153">
    <property type="term" value="C:cell division site"/>
    <property type="evidence" value="ECO:0007669"/>
    <property type="project" value="UniProtKB-UniRule"/>
</dbReference>
<dbReference type="GO" id="GO:0005886">
    <property type="term" value="C:plasma membrane"/>
    <property type="evidence" value="ECO:0007669"/>
    <property type="project" value="UniProtKB-SubCell"/>
</dbReference>
<dbReference type="GO" id="GO:0015648">
    <property type="term" value="F:lipid-linked peptidoglycan transporter activity"/>
    <property type="evidence" value="ECO:0007669"/>
    <property type="project" value="TreeGrafter"/>
</dbReference>
<dbReference type="GO" id="GO:0008955">
    <property type="term" value="F:peptidoglycan glycosyltransferase activity"/>
    <property type="evidence" value="ECO:0007669"/>
    <property type="project" value="UniProtKB-UniRule"/>
</dbReference>
<dbReference type="GO" id="GO:0071555">
    <property type="term" value="P:cell wall organization"/>
    <property type="evidence" value="ECO:0007669"/>
    <property type="project" value="UniProtKB-KW"/>
</dbReference>
<dbReference type="GO" id="GO:0043093">
    <property type="term" value="P:FtsZ-dependent cytokinesis"/>
    <property type="evidence" value="ECO:0007669"/>
    <property type="project" value="UniProtKB-UniRule"/>
</dbReference>
<dbReference type="GO" id="GO:0009252">
    <property type="term" value="P:peptidoglycan biosynthetic process"/>
    <property type="evidence" value="ECO:0007669"/>
    <property type="project" value="UniProtKB-UniRule"/>
</dbReference>
<dbReference type="GO" id="GO:0008360">
    <property type="term" value="P:regulation of cell shape"/>
    <property type="evidence" value="ECO:0007669"/>
    <property type="project" value="UniProtKB-KW"/>
</dbReference>
<dbReference type="HAMAP" id="MF_00913">
    <property type="entry name" value="PGT_FtsW_proteobact"/>
    <property type="match status" value="1"/>
</dbReference>
<dbReference type="InterPro" id="IPR013437">
    <property type="entry name" value="FtsW"/>
</dbReference>
<dbReference type="InterPro" id="IPR001182">
    <property type="entry name" value="FtsW/RodA"/>
</dbReference>
<dbReference type="NCBIfam" id="TIGR02614">
    <property type="entry name" value="ftsW"/>
    <property type="match status" value="1"/>
</dbReference>
<dbReference type="PANTHER" id="PTHR30474">
    <property type="entry name" value="CELL CYCLE PROTEIN"/>
    <property type="match status" value="1"/>
</dbReference>
<dbReference type="PANTHER" id="PTHR30474:SF2">
    <property type="entry name" value="PEPTIDOGLYCAN GLYCOSYLTRANSFERASE FTSW-RELATED"/>
    <property type="match status" value="1"/>
</dbReference>
<dbReference type="Pfam" id="PF01098">
    <property type="entry name" value="FTSW_RODA_SPOVE"/>
    <property type="match status" value="1"/>
</dbReference>
<keyword id="KW-0131">Cell cycle</keyword>
<keyword id="KW-0132">Cell division</keyword>
<keyword id="KW-0997">Cell inner membrane</keyword>
<keyword id="KW-1003">Cell membrane</keyword>
<keyword id="KW-0133">Cell shape</keyword>
<keyword id="KW-0961">Cell wall biogenesis/degradation</keyword>
<keyword id="KW-0328">Glycosyltransferase</keyword>
<keyword id="KW-0472">Membrane</keyword>
<keyword id="KW-0573">Peptidoglycan synthesis</keyword>
<keyword id="KW-1185">Reference proteome</keyword>
<keyword id="KW-0808">Transferase</keyword>
<keyword id="KW-0812">Transmembrane</keyword>
<keyword id="KW-1133">Transmembrane helix</keyword>